<protein>
    <recommendedName>
        <fullName evidence="1">Holo-[acyl-carrier-protein] synthase</fullName>
        <shortName evidence="1">Holo-ACP synthase</shortName>
        <ecNumber evidence="1">2.7.8.7</ecNumber>
    </recommendedName>
    <alternativeName>
        <fullName evidence="1">4'-phosphopantetheinyl transferase AcpS</fullName>
    </alternativeName>
</protein>
<accession>A0L8S4</accession>
<dbReference type="EC" id="2.7.8.7" evidence="1"/>
<dbReference type="EMBL" id="CP000471">
    <property type="protein sequence ID" value="ABK44367.1"/>
    <property type="molecule type" value="Genomic_DNA"/>
</dbReference>
<dbReference type="RefSeq" id="WP_011713511.1">
    <property type="nucleotide sequence ID" value="NC_008576.1"/>
</dbReference>
<dbReference type="SMR" id="A0L8S4"/>
<dbReference type="STRING" id="156889.Mmc1_1859"/>
<dbReference type="KEGG" id="mgm:Mmc1_1859"/>
<dbReference type="eggNOG" id="COG0736">
    <property type="taxonomic scope" value="Bacteria"/>
</dbReference>
<dbReference type="HOGENOM" id="CLU_089696_3_1_5"/>
<dbReference type="OrthoDB" id="517356at2"/>
<dbReference type="Proteomes" id="UP000002586">
    <property type="component" value="Chromosome"/>
</dbReference>
<dbReference type="GO" id="GO:0005737">
    <property type="term" value="C:cytoplasm"/>
    <property type="evidence" value="ECO:0007669"/>
    <property type="project" value="UniProtKB-SubCell"/>
</dbReference>
<dbReference type="GO" id="GO:0008897">
    <property type="term" value="F:holo-[acyl-carrier-protein] synthase activity"/>
    <property type="evidence" value="ECO:0007669"/>
    <property type="project" value="UniProtKB-UniRule"/>
</dbReference>
<dbReference type="GO" id="GO:0000287">
    <property type="term" value="F:magnesium ion binding"/>
    <property type="evidence" value="ECO:0007669"/>
    <property type="project" value="UniProtKB-UniRule"/>
</dbReference>
<dbReference type="GO" id="GO:0006633">
    <property type="term" value="P:fatty acid biosynthetic process"/>
    <property type="evidence" value="ECO:0007669"/>
    <property type="project" value="UniProtKB-UniRule"/>
</dbReference>
<dbReference type="Gene3D" id="3.90.470.20">
    <property type="entry name" value="4'-phosphopantetheinyl transferase domain"/>
    <property type="match status" value="1"/>
</dbReference>
<dbReference type="HAMAP" id="MF_00101">
    <property type="entry name" value="AcpS"/>
    <property type="match status" value="1"/>
</dbReference>
<dbReference type="InterPro" id="IPR008278">
    <property type="entry name" value="4-PPantetheinyl_Trfase_dom"/>
</dbReference>
<dbReference type="InterPro" id="IPR037143">
    <property type="entry name" value="4-PPantetheinyl_Trfase_dom_sf"/>
</dbReference>
<dbReference type="InterPro" id="IPR002582">
    <property type="entry name" value="ACPS"/>
</dbReference>
<dbReference type="InterPro" id="IPR004568">
    <property type="entry name" value="Ppantetheine-prot_Trfase_dom"/>
</dbReference>
<dbReference type="NCBIfam" id="TIGR00516">
    <property type="entry name" value="acpS"/>
    <property type="match status" value="1"/>
</dbReference>
<dbReference type="NCBIfam" id="TIGR00556">
    <property type="entry name" value="pantethn_trn"/>
    <property type="match status" value="1"/>
</dbReference>
<dbReference type="Pfam" id="PF01648">
    <property type="entry name" value="ACPS"/>
    <property type="match status" value="1"/>
</dbReference>
<dbReference type="SUPFAM" id="SSF56214">
    <property type="entry name" value="4'-phosphopantetheinyl transferase"/>
    <property type="match status" value="1"/>
</dbReference>
<reference key="1">
    <citation type="journal article" date="2009" name="Appl. Environ. Microbiol.">
        <title>Complete genome sequence of the chemolithoautotrophic marine magnetotactic coccus strain MC-1.</title>
        <authorList>
            <person name="Schubbe S."/>
            <person name="Williams T.J."/>
            <person name="Xie G."/>
            <person name="Kiss H.E."/>
            <person name="Brettin T.S."/>
            <person name="Martinez D."/>
            <person name="Ross C.A."/>
            <person name="Schuler D."/>
            <person name="Cox B.L."/>
            <person name="Nealson K.H."/>
            <person name="Bazylinski D.A."/>
        </authorList>
    </citation>
    <scope>NUCLEOTIDE SEQUENCE [LARGE SCALE GENOMIC DNA]</scope>
    <source>
        <strain>ATCC BAA-1437 / JCM 17883 / MC-1</strain>
    </source>
</reference>
<proteinExistence type="inferred from homology"/>
<comment type="function">
    <text evidence="1">Transfers the 4'-phosphopantetheine moiety from coenzyme A to a Ser of acyl-carrier-protein.</text>
</comment>
<comment type="catalytic activity">
    <reaction evidence="1">
        <text>apo-[ACP] + CoA = holo-[ACP] + adenosine 3',5'-bisphosphate + H(+)</text>
        <dbReference type="Rhea" id="RHEA:12068"/>
        <dbReference type="Rhea" id="RHEA-COMP:9685"/>
        <dbReference type="Rhea" id="RHEA-COMP:9690"/>
        <dbReference type="ChEBI" id="CHEBI:15378"/>
        <dbReference type="ChEBI" id="CHEBI:29999"/>
        <dbReference type="ChEBI" id="CHEBI:57287"/>
        <dbReference type="ChEBI" id="CHEBI:58343"/>
        <dbReference type="ChEBI" id="CHEBI:64479"/>
        <dbReference type="EC" id="2.7.8.7"/>
    </reaction>
</comment>
<comment type="cofactor">
    <cofactor evidence="1">
        <name>Mg(2+)</name>
        <dbReference type="ChEBI" id="CHEBI:18420"/>
    </cofactor>
</comment>
<comment type="subcellular location">
    <subcellularLocation>
        <location evidence="1">Cytoplasm</location>
    </subcellularLocation>
</comment>
<comment type="similarity">
    <text evidence="1">Belongs to the P-Pant transferase superfamily. AcpS family.</text>
</comment>
<evidence type="ECO:0000255" key="1">
    <source>
        <dbReference type="HAMAP-Rule" id="MF_00101"/>
    </source>
</evidence>
<keyword id="KW-0963">Cytoplasm</keyword>
<keyword id="KW-0275">Fatty acid biosynthesis</keyword>
<keyword id="KW-0276">Fatty acid metabolism</keyword>
<keyword id="KW-0444">Lipid biosynthesis</keyword>
<keyword id="KW-0443">Lipid metabolism</keyword>
<keyword id="KW-0460">Magnesium</keyword>
<keyword id="KW-0479">Metal-binding</keyword>
<keyword id="KW-1185">Reference proteome</keyword>
<keyword id="KW-0808">Transferase</keyword>
<sequence length="138" mass="15188">MIVGIGNDLVEIQRLTNMLNKGHGQRFLERCFTQQEQQLCNGRSTPQRACCYAKRFAAKEAVIKALGVGFRQGLWFTDIEVLPNQLGRPTVTLHGATAQWLACHHPGQVNIHLSLSDEKGLAIATALIECHPLAMAPS</sequence>
<name>ACPS_MAGMM</name>
<gene>
    <name evidence="1" type="primary">acpS</name>
    <name type="ordered locus">Mmc1_1859</name>
</gene>
<feature type="chain" id="PRO_1000008448" description="Holo-[acyl-carrier-protein] synthase">
    <location>
        <begin position="1"/>
        <end position="138"/>
    </location>
</feature>
<feature type="binding site" evidence="1">
    <location>
        <position position="8"/>
    </location>
    <ligand>
        <name>Mg(2+)</name>
        <dbReference type="ChEBI" id="CHEBI:18420"/>
    </ligand>
</feature>
<feature type="binding site" evidence="1">
    <location>
        <position position="60"/>
    </location>
    <ligand>
        <name>Mg(2+)</name>
        <dbReference type="ChEBI" id="CHEBI:18420"/>
    </ligand>
</feature>
<organism>
    <name type="scientific">Magnetococcus marinus (strain ATCC BAA-1437 / JCM 17883 / MC-1)</name>
    <dbReference type="NCBI Taxonomy" id="156889"/>
    <lineage>
        <taxon>Bacteria</taxon>
        <taxon>Pseudomonadati</taxon>
        <taxon>Pseudomonadota</taxon>
        <taxon>Alphaproteobacteria</taxon>
        <taxon>Magnetococcales</taxon>
        <taxon>Magnetococcaceae</taxon>
        <taxon>Magnetococcus</taxon>
    </lineage>
</organism>